<proteinExistence type="inferred from homology"/>
<feature type="chain" id="PRO_1000186861" description="LL-diaminopimelate aminotransferase">
    <location>
        <begin position="1"/>
        <end position="411"/>
    </location>
</feature>
<feature type="binding site" evidence="1">
    <location>
        <position position="15"/>
    </location>
    <ligand>
        <name>substrate</name>
    </ligand>
</feature>
<feature type="binding site" evidence="1">
    <location>
        <position position="42"/>
    </location>
    <ligand>
        <name>substrate</name>
    </ligand>
</feature>
<feature type="binding site" evidence="1">
    <location>
        <position position="72"/>
    </location>
    <ligand>
        <name>pyridoxal 5'-phosphate</name>
        <dbReference type="ChEBI" id="CHEBI:597326"/>
    </ligand>
</feature>
<feature type="binding site" evidence="1">
    <location>
        <begin position="108"/>
        <end position="109"/>
    </location>
    <ligand>
        <name>pyridoxal 5'-phosphate</name>
        <dbReference type="ChEBI" id="CHEBI:597326"/>
    </ligand>
</feature>
<feature type="binding site" evidence="1">
    <location>
        <position position="109"/>
    </location>
    <ligand>
        <name>substrate</name>
    </ligand>
</feature>
<feature type="binding site" evidence="1">
    <location>
        <position position="132"/>
    </location>
    <ligand>
        <name>pyridoxal 5'-phosphate</name>
        <dbReference type="ChEBI" id="CHEBI:597326"/>
    </ligand>
</feature>
<feature type="binding site" evidence="1">
    <location>
        <position position="132"/>
    </location>
    <ligand>
        <name>substrate</name>
    </ligand>
</feature>
<feature type="binding site" evidence="1">
    <location>
        <position position="187"/>
    </location>
    <ligand>
        <name>pyridoxal 5'-phosphate</name>
        <dbReference type="ChEBI" id="CHEBI:597326"/>
    </ligand>
</feature>
<feature type="binding site" evidence="1">
    <location>
        <position position="187"/>
    </location>
    <ligand>
        <name>substrate</name>
    </ligand>
</feature>
<feature type="binding site" evidence="1">
    <location>
        <position position="218"/>
    </location>
    <ligand>
        <name>pyridoxal 5'-phosphate</name>
        <dbReference type="ChEBI" id="CHEBI:597326"/>
    </ligand>
</feature>
<feature type="binding site" evidence="1">
    <location>
        <begin position="246"/>
        <end position="248"/>
    </location>
    <ligand>
        <name>pyridoxal 5'-phosphate</name>
        <dbReference type="ChEBI" id="CHEBI:597326"/>
    </ligand>
</feature>
<feature type="binding site" evidence="1">
    <location>
        <position position="257"/>
    </location>
    <ligand>
        <name>pyridoxal 5'-phosphate</name>
        <dbReference type="ChEBI" id="CHEBI:597326"/>
    </ligand>
</feature>
<feature type="binding site" evidence="1">
    <location>
        <position position="292"/>
    </location>
    <ligand>
        <name>pyridoxal 5'-phosphate</name>
        <dbReference type="ChEBI" id="CHEBI:597326"/>
    </ligand>
</feature>
<feature type="binding site" evidence="1">
    <location>
        <position position="292"/>
    </location>
    <ligand>
        <name>substrate</name>
    </ligand>
</feature>
<feature type="binding site" evidence="1">
    <location>
        <position position="388"/>
    </location>
    <ligand>
        <name>substrate</name>
    </ligand>
</feature>
<feature type="modified residue" description="N6-(pyridoxal phosphate)lysine" evidence="1">
    <location>
        <position position="249"/>
    </location>
</feature>
<name>DAPAT_CYAP4</name>
<dbReference type="EC" id="2.6.1.83" evidence="1"/>
<dbReference type="EMBL" id="CP001344">
    <property type="protein sequence ID" value="ACL46734.1"/>
    <property type="molecule type" value="Genomic_DNA"/>
</dbReference>
<dbReference type="SMR" id="B8HJY4"/>
<dbReference type="STRING" id="395961.Cyan7425_4424"/>
<dbReference type="KEGG" id="cyn:Cyan7425_4424"/>
<dbReference type="eggNOG" id="COG0436">
    <property type="taxonomic scope" value="Bacteria"/>
</dbReference>
<dbReference type="HOGENOM" id="CLU_051433_0_0_3"/>
<dbReference type="OrthoDB" id="9802328at2"/>
<dbReference type="UniPathway" id="UPA00034">
    <property type="reaction ID" value="UER00466"/>
</dbReference>
<dbReference type="GO" id="GO:0010285">
    <property type="term" value="F:L,L-diaminopimelate aminotransferase activity"/>
    <property type="evidence" value="ECO:0007669"/>
    <property type="project" value="UniProtKB-UniRule"/>
</dbReference>
<dbReference type="GO" id="GO:0030170">
    <property type="term" value="F:pyridoxal phosphate binding"/>
    <property type="evidence" value="ECO:0007669"/>
    <property type="project" value="UniProtKB-UniRule"/>
</dbReference>
<dbReference type="GO" id="GO:0033362">
    <property type="term" value="P:lysine biosynthetic process via diaminopimelate, diaminopimelate-aminotransferase pathway"/>
    <property type="evidence" value="ECO:0007669"/>
    <property type="project" value="UniProtKB-UniRule"/>
</dbReference>
<dbReference type="CDD" id="cd00609">
    <property type="entry name" value="AAT_like"/>
    <property type="match status" value="1"/>
</dbReference>
<dbReference type="FunFam" id="3.40.640.10:FF:000099">
    <property type="entry name" value="LL-diaminopimelate aminotransferase, chloroplastic"/>
    <property type="match status" value="1"/>
</dbReference>
<dbReference type="Gene3D" id="3.90.1150.10">
    <property type="entry name" value="Aspartate Aminotransferase, domain 1"/>
    <property type="match status" value="1"/>
</dbReference>
<dbReference type="Gene3D" id="3.40.640.10">
    <property type="entry name" value="Type I PLP-dependent aspartate aminotransferase-like (Major domain)"/>
    <property type="match status" value="1"/>
</dbReference>
<dbReference type="HAMAP" id="MF_01642">
    <property type="entry name" value="DapL_aminotrans_1"/>
    <property type="match status" value="1"/>
</dbReference>
<dbReference type="InterPro" id="IPR004839">
    <property type="entry name" value="Aminotransferase_I/II_large"/>
</dbReference>
<dbReference type="InterPro" id="IPR019942">
    <property type="entry name" value="DapL/ALD1"/>
</dbReference>
<dbReference type="InterPro" id="IPR015424">
    <property type="entry name" value="PyrdxlP-dep_Trfase"/>
</dbReference>
<dbReference type="InterPro" id="IPR015421">
    <property type="entry name" value="PyrdxlP-dep_Trfase_major"/>
</dbReference>
<dbReference type="InterPro" id="IPR015422">
    <property type="entry name" value="PyrdxlP-dep_Trfase_small"/>
</dbReference>
<dbReference type="NCBIfam" id="TIGR03542">
    <property type="entry name" value="DAPAT_plant"/>
    <property type="match status" value="1"/>
</dbReference>
<dbReference type="PANTHER" id="PTHR43144">
    <property type="entry name" value="AMINOTRANSFERASE"/>
    <property type="match status" value="1"/>
</dbReference>
<dbReference type="Pfam" id="PF00155">
    <property type="entry name" value="Aminotran_1_2"/>
    <property type="match status" value="1"/>
</dbReference>
<dbReference type="SUPFAM" id="SSF53383">
    <property type="entry name" value="PLP-dependent transferases"/>
    <property type="match status" value="1"/>
</dbReference>
<accession>B8HJY4</accession>
<reference key="1">
    <citation type="journal article" date="2011" name="MBio">
        <title>Novel metabolic attributes of the genus Cyanothece, comprising a group of unicellular nitrogen-fixing Cyanobacteria.</title>
        <authorList>
            <person name="Bandyopadhyay A."/>
            <person name="Elvitigala T."/>
            <person name="Welsh E."/>
            <person name="Stockel J."/>
            <person name="Liberton M."/>
            <person name="Min H."/>
            <person name="Sherman L.A."/>
            <person name="Pakrasi H.B."/>
        </authorList>
    </citation>
    <scope>NUCLEOTIDE SEQUENCE [LARGE SCALE GENOMIC DNA]</scope>
    <source>
        <strain>PCC 7425 / ATCC 29141</strain>
    </source>
</reference>
<keyword id="KW-0032">Aminotransferase</keyword>
<keyword id="KW-0663">Pyridoxal phosphate</keyword>
<keyword id="KW-0808">Transferase</keyword>
<sequence length="411" mass="45020">MATINDHYLKLKAGYLFPEIARRVNAFAAAQPDAQIIRLGIGDVTEPLPAACRTAMIKAVEDMGDRSSFRGYGPEQGYEWLRQSIAEHDFQRRGCEIDASEIFVSDGSKCDTGNILDIFGDNNTIAVTDPVYPVYVDTNVMAGHTGAANEQGEYAGLVYLPVTAENGFTASLPEQKVDLIYLCFPNNPTGATASRAHLQQWVDYARANGSIIFFDAAYEAFITDPDLPHSIYEIPGARSCAIEFRSFSKNAGFTGTRCALTVVPKTLTAKAADGSEVEIWKLWNRRQSTKFNGVSYIVQRGAEAVYSPEGQAEVKGLVSFYLENARIIREQLSANGLAVYGGVNAPYVWVKTPSGFSSWEFFDKLLHTCHVVVTPGSGFGAAGEGYFRVSAFNSRANVEMAMQRIREKLAT</sequence>
<protein>
    <recommendedName>
        <fullName evidence="1">LL-diaminopimelate aminotransferase</fullName>
        <shortName evidence="1">DAP-AT</shortName>
        <shortName evidence="1">DAP-aminotransferase</shortName>
        <shortName evidence="1">LL-DAP-aminotransferase</shortName>
        <ecNumber evidence="1">2.6.1.83</ecNumber>
    </recommendedName>
</protein>
<organism>
    <name type="scientific">Cyanothece sp. (strain PCC 7425 / ATCC 29141)</name>
    <dbReference type="NCBI Taxonomy" id="395961"/>
    <lineage>
        <taxon>Bacteria</taxon>
        <taxon>Bacillati</taxon>
        <taxon>Cyanobacteriota</taxon>
        <taxon>Cyanophyceae</taxon>
        <taxon>Gomontiellales</taxon>
        <taxon>Cyanothecaceae</taxon>
        <taxon>Cyanothece</taxon>
    </lineage>
</organism>
<gene>
    <name evidence="1" type="primary">dapL</name>
    <name type="ordered locus">Cyan7425_4424</name>
</gene>
<comment type="function">
    <text evidence="1">Involved in the synthesis of meso-diaminopimelate (m-DAP or DL-DAP), required for both lysine and peptidoglycan biosynthesis. Catalyzes the direct conversion of tetrahydrodipicolinate to LL-diaminopimelate.</text>
</comment>
<comment type="catalytic activity">
    <reaction evidence="1">
        <text>(2S,6S)-2,6-diaminopimelate + 2-oxoglutarate = (S)-2,3,4,5-tetrahydrodipicolinate + L-glutamate + H2O + H(+)</text>
        <dbReference type="Rhea" id="RHEA:23988"/>
        <dbReference type="ChEBI" id="CHEBI:15377"/>
        <dbReference type="ChEBI" id="CHEBI:15378"/>
        <dbReference type="ChEBI" id="CHEBI:16810"/>
        <dbReference type="ChEBI" id="CHEBI:16845"/>
        <dbReference type="ChEBI" id="CHEBI:29985"/>
        <dbReference type="ChEBI" id="CHEBI:57609"/>
        <dbReference type="EC" id="2.6.1.83"/>
    </reaction>
</comment>
<comment type="cofactor">
    <cofactor evidence="1">
        <name>pyridoxal 5'-phosphate</name>
        <dbReference type="ChEBI" id="CHEBI:597326"/>
    </cofactor>
</comment>
<comment type="pathway">
    <text evidence="1">Amino-acid biosynthesis; L-lysine biosynthesis via DAP pathway; LL-2,6-diaminopimelate from (S)-tetrahydrodipicolinate (aminotransferase route): step 1/1.</text>
</comment>
<comment type="subunit">
    <text evidence="1">Homodimer.</text>
</comment>
<comment type="similarity">
    <text evidence="1">Belongs to the class-I pyridoxal-phosphate-dependent aminotransferase family. LL-diaminopimelate aminotransferase subfamily.</text>
</comment>
<evidence type="ECO:0000255" key="1">
    <source>
        <dbReference type="HAMAP-Rule" id="MF_01642"/>
    </source>
</evidence>